<comment type="function">
    <text evidence="6 7">Involved in chitin-triggered immune signaling and is required for reactive oxygen species (ROS) production (PubMed:29907700). Acts downstream of SD129 in defense signaling triggered by the pathogen-associated molecular pattern (PAMP) 3-OH-C10:0, a medium-chain 3-hydroxy fatty acid (PubMed:31922267).</text>
</comment>
<comment type="catalytic activity">
    <reaction evidence="7">
        <text>L-seryl-[protein] + ATP = O-phospho-L-seryl-[protein] + ADP + H(+)</text>
        <dbReference type="Rhea" id="RHEA:17989"/>
        <dbReference type="Rhea" id="RHEA-COMP:9863"/>
        <dbReference type="Rhea" id="RHEA-COMP:11604"/>
        <dbReference type="ChEBI" id="CHEBI:15378"/>
        <dbReference type="ChEBI" id="CHEBI:29999"/>
        <dbReference type="ChEBI" id="CHEBI:30616"/>
        <dbReference type="ChEBI" id="CHEBI:83421"/>
        <dbReference type="ChEBI" id="CHEBI:456216"/>
        <dbReference type="EC" id="2.7.11.1"/>
    </reaction>
    <physiologicalReaction direction="left-to-right" evidence="7">
        <dbReference type="Rhea" id="RHEA:17990"/>
    </physiologicalReaction>
</comment>
<comment type="catalytic activity">
    <reaction evidence="7">
        <text>L-threonyl-[protein] + ATP = O-phospho-L-threonyl-[protein] + ADP + H(+)</text>
        <dbReference type="Rhea" id="RHEA:46608"/>
        <dbReference type="Rhea" id="RHEA-COMP:11060"/>
        <dbReference type="Rhea" id="RHEA-COMP:11605"/>
        <dbReference type="ChEBI" id="CHEBI:15378"/>
        <dbReference type="ChEBI" id="CHEBI:30013"/>
        <dbReference type="ChEBI" id="CHEBI:30616"/>
        <dbReference type="ChEBI" id="CHEBI:61977"/>
        <dbReference type="ChEBI" id="CHEBI:456216"/>
        <dbReference type="EC" id="2.7.11.1"/>
    </reaction>
    <physiologicalReaction direction="left-to-right" evidence="7">
        <dbReference type="Rhea" id="RHEA:46609"/>
    </physiologicalReaction>
</comment>
<comment type="subunit">
    <text evidence="5 7">Interacts with the Xanthomonas campestris effector XopAC/AvrAC (PubMed:23951354). Interacts with SD129 (PubMed:31922267).</text>
</comment>
<comment type="subcellular location">
    <subcellularLocation>
        <location evidence="7">Cell membrane</location>
        <topology evidence="1">Lipid-anchor</topology>
    </subcellularLocation>
</comment>
<comment type="PTM">
    <text evidence="7">Phosphorylated by SD129 at Thr-306 and Thr-310 in response to the pathogen-associated molecular pattern (PAMP) 3-OH-C10:0, a medium-chain 3-hydroxy fatty acid.</text>
</comment>
<comment type="similarity">
    <text evidence="3">Belongs to the protein kinase superfamily. Ser/Thr protein kinase family.</text>
</comment>
<comment type="caution">
    <text evidence="10">It is uncertain whether Met-1 or Met-55 is the initiator.</text>
</comment>
<keyword id="KW-0067">ATP-binding</keyword>
<keyword id="KW-1003">Cell membrane</keyword>
<keyword id="KW-0418">Kinase</keyword>
<keyword id="KW-0449">Lipoprotein</keyword>
<keyword id="KW-0472">Membrane</keyword>
<keyword id="KW-0519">Myristate</keyword>
<keyword id="KW-0547">Nucleotide-binding</keyword>
<keyword id="KW-0597">Phosphoprotein</keyword>
<keyword id="KW-0611">Plant defense</keyword>
<keyword id="KW-1185">Reference proteome</keyword>
<keyword id="KW-0723">Serine/threonine-protein kinase</keyword>
<keyword id="KW-0808">Transferase</keyword>
<name>PBL34_ARATH</name>
<accession>Q9LFP7</accession>
<evidence type="ECO:0000250" key="1">
    <source>
        <dbReference type="UniProtKB" id="O48814"/>
    </source>
</evidence>
<evidence type="ECO:0000250" key="2">
    <source>
        <dbReference type="UniProtKB" id="Q9FE20"/>
    </source>
</evidence>
<evidence type="ECO:0000255" key="3">
    <source>
        <dbReference type="PROSITE-ProRule" id="PRU00159"/>
    </source>
</evidence>
<evidence type="ECO:0000256" key="4">
    <source>
        <dbReference type="SAM" id="MobiDB-lite"/>
    </source>
</evidence>
<evidence type="ECO:0000269" key="5">
    <source>
    </source>
</evidence>
<evidence type="ECO:0000269" key="6">
    <source>
    </source>
</evidence>
<evidence type="ECO:0000269" key="7">
    <source>
    </source>
</evidence>
<evidence type="ECO:0000303" key="8">
    <source>
    </source>
</evidence>
<evidence type="ECO:0000303" key="9">
    <source>
    </source>
</evidence>
<evidence type="ECO:0000305" key="10"/>
<evidence type="ECO:0000312" key="11">
    <source>
        <dbReference type="EMBL" id="AED92114.1"/>
    </source>
</evidence>
<evidence type="ECO:0000312" key="12">
    <source>
        <dbReference type="EMBL" id="CAC01827.1"/>
    </source>
</evidence>
<gene>
    <name evidence="9" type="primary">PBL34</name>
    <name evidence="8" type="synonym">PIX7</name>
    <name evidence="11" type="ordered locus">At5g15080</name>
    <name evidence="12" type="ORF">F2G14.200</name>
</gene>
<protein>
    <recommendedName>
        <fullName evidence="9">Serine/threonine-protein kinase PBL34</fullName>
        <ecNumber evidence="7">2.7.11.1</ecNumber>
    </recommendedName>
    <alternativeName>
        <fullName evidence="9">PBS1-like protein 34</fullName>
    </alternativeName>
    <alternativeName>
        <fullName evidence="9">Receptor-like cytoplasmic kinase PBL34</fullName>
    </alternativeName>
</protein>
<reference key="1">
    <citation type="journal article" date="2000" name="Nature">
        <title>Sequence and analysis of chromosome 5 of the plant Arabidopsis thaliana.</title>
        <authorList>
            <person name="Tabata S."/>
            <person name="Kaneko T."/>
            <person name="Nakamura Y."/>
            <person name="Kotani H."/>
            <person name="Kato T."/>
            <person name="Asamizu E."/>
            <person name="Miyajima N."/>
            <person name="Sasamoto S."/>
            <person name="Kimura T."/>
            <person name="Hosouchi T."/>
            <person name="Kawashima K."/>
            <person name="Kohara M."/>
            <person name="Matsumoto M."/>
            <person name="Matsuno A."/>
            <person name="Muraki A."/>
            <person name="Nakayama S."/>
            <person name="Nakazaki N."/>
            <person name="Naruo K."/>
            <person name="Okumura S."/>
            <person name="Shinpo S."/>
            <person name="Takeuchi C."/>
            <person name="Wada T."/>
            <person name="Watanabe A."/>
            <person name="Yamada M."/>
            <person name="Yasuda M."/>
            <person name="Sato S."/>
            <person name="de la Bastide M."/>
            <person name="Huang E."/>
            <person name="Spiegel L."/>
            <person name="Gnoj L."/>
            <person name="O'Shaughnessy A."/>
            <person name="Preston R."/>
            <person name="Habermann K."/>
            <person name="Murray J."/>
            <person name="Johnson D."/>
            <person name="Rohlfing T."/>
            <person name="Nelson J."/>
            <person name="Stoneking T."/>
            <person name="Pepin K."/>
            <person name="Spieth J."/>
            <person name="Sekhon M."/>
            <person name="Armstrong J."/>
            <person name="Becker M."/>
            <person name="Belter E."/>
            <person name="Cordum H."/>
            <person name="Cordes M."/>
            <person name="Courtney L."/>
            <person name="Courtney W."/>
            <person name="Dante M."/>
            <person name="Du H."/>
            <person name="Edwards J."/>
            <person name="Fryman J."/>
            <person name="Haakensen B."/>
            <person name="Lamar E."/>
            <person name="Latreille P."/>
            <person name="Leonard S."/>
            <person name="Meyer R."/>
            <person name="Mulvaney E."/>
            <person name="Ozersky P."/>
            <person name="Riley A."/>
            <person name="Strowmatt C."/>
            <person name="Wagner-McPherson C."/>
            <person name="Wollam A."/>
            <person name="Yoakum M."/>
            <person name="Bell M."/>
            <person name="Dedhia N."/>
            <person name="Parnell L."/>
            <person name="Shah R."/>
            <person name="Rodriguez M."/>
            <person name="Hoon See L."/>
            <person name="Vil D."/>
            <person name="Baker J."/>
            <person name="Kirchoff K."/>
            <person name="Toth K."/>
            <person name="King L."/>
            <person name="Bahret A."/>
            <person name="Miller B."/>
            <person name="Marra M.A."/>
            <person name="Martienssen R."/>
            <person name="McCombie W.R."/>
            <person name="Wilson R.K."/>
            <person name="Murphy G."/>
            <person name="Bancroft I."/>
            <person name="Volckaert G."/>
            <person name="Wambutt R."/>
            <person name="Duesterhoeft A."/>
            <person name="Stiekema W."/>
            <person name="Pohl T."/>
            <person name="Entian K.-D."/>
            <person name="Terryn N."/>
            <person name="Hartley N."/>
            <person name="Bent E."/>
            <person name="Johnson S."/>
            <person name="Langham S.-A."/>
            <person name="McCullagh B."/>
            <person name="Robben J."/>
            <person name="Grymonprez B."/>
            <person name="Zimmermann W."/>
            <person name="Ramsperger U."/>
            <person name="Wedler H."/>
            <person name="Balke K."/>
            <person name="Wedler E."/>
            <person name="Peters S."/>
            <person name="van Staveren M."/>
            <person name="Dirkse W."/>
            <person name="Mooijman P."/>
            <person name="Klein Lankhorst R."/>
            <person name="Weitzenegger T."/>
            <person name="Bothe G."/>
            <person name="Rose M."/>
            <person name="Hauf J."/>
            <person name="Berneiser S."/>
            <person name="Hempel S."/>
            <person name="Feldpausch M."/>
            <person name="Lamberth S."/>
            <person name="Villarroel R."/>
            <person name="Gielen J."/>
            <person name="Ardiles W."/>
            <person name="Bents O."/>
            <person name="Lemcke K."/>
            <person name="Kolesov G."/>
            <person name="Mayer K.F.X."/>
            <person name="Rudd S."/>
            <person name="Schoof H."/>
            <person name="Schueller C."/>
            <person name="Zaccaria P."/>
            <person name="Mewes H.-W."/>
            <person name="Bevan M."/>
            <person name="Fransz P.F."/>
        </authorList>
    </citation>
    <scope>NUCLEOTIDE SEQUENCE [LARGE SCALE GENOMIC DNA]</scope>
    <source>
        <strain>cv. Columbia</strain>
    </source>
</reference>
<reference key="2">
    <citation type="journal article" date="2017" name="Plant J.">
        <title>Araport11: a complete reannotation of the Arabidopsis thaliana reference genome.</title>
        <authorList>
            <person name="Cheng C.Y."/>
            <person name="Krishnakumar V."/>
            <person name="Chan A.P."/>
            <person name="Thibaud-Nissen F."/>
            <person name="Schobel S."/>
            <person name="Town C.D."/>
        </authorList>
    </citation>
    <scope>GENOME REANNOTATION</scope>
    <source>
        <strain>cv. Columbia</strain>
    </source>
</reference>
<reference key="3">
    <citation type="journal article" date="2003" name="Science">
        <title>Empirical analysis of transcriptional activity in the Arabidopsis genome.</title>
        <authorList>
            <person name="Yamada K."/>
            <person name="Lim J."/>
            <person name="Dale J.M."/>
            <person name="Chen H."/>
            <person name="Shinn P."/>
            <person name="Palm C.J."/>
            <person name="Southwick A.M."/>
            <person name="Wu H.C."/>
            <person name="Kim C.J."/>
            <person name="Nguyen M."/>
            <person name="Pham P.K."/>
            <person name="Cheuk R.F."/>
            <person name="Karlin-Newmann G."/>
            <person name="Liu S.X."/>
            <person name="Lam B."/>
            <person name="Sakano H."/>
            <person name="Wu T."/>
            <person name="Yu G."/>
            <person name="Miranda M."/>
            <person name="Quach H.L."/>
            <person name="Tripp M."/>
            <person name="Chang C.H."/>
            <person name="Lee J.M."/>
            <person name="Toriumi M.J."/>
            <person name="Chan M.M."/>
            <person name="Tang C.C."/>
            <person name="Onodera C.S."/>
            <person name="Deng J.M."/>
            <person name="Akiyama K."/>
            <person name="Ansari Y."/>
            <person name="Arakawa T."/>
            <person name="Banh J."/>
            <person name="Banno F."/>
            <person name="Bowser L."/>
            <person name="Brooks S.Y."/>
            <person name="Carninci P."/>
            <person name="Chao Q."/>
            <person name="Choy N."/>
            <person name="Enju A."/>
            <person name="Goldsmith A.D."/>
            <person name="Gurjal M."/>
            <person name="Hansen N.F."/>
            <person name="Hayashizaki Y."/>
            <person name="Johnson-Hopson C."/>
            <person name="Hsuan V.W."/>
            <person name="Iida K."/>
            <person name="Karnes M."/>
            <person name="Khan S."/>
            <person name="Koesema E."/>
            <person name="Ishida J."/>
            <person name="Jiang P.X."/>
            <person name="Jones T."/>
            <person name="Kawai J."/>
            <person name="Kamiya A."/>
            <person name="Meyers C."/>
            <person name="Nakajima M."/>
            <person name="Narusaka M."/>
            <person name="Seki M."/>
            <person name="Sakurai T."/>
            <person name="Satou M."/>
            <person name="Tamse R."/>
            <person name="Vaysberg M."/>
            <person name="Wallender E.K."/>
            <person name="Wong C."/>
            <person name="Yamamura Y."/>
            <person name="Yuan S."/>
            <person name="Shinozaki K."/>
            <person name="Davis R.W."/>
            <person name="Theologis A."/>
            <person name="Ecker J.R."/>
        </authorList>
    </citation>
    <scope>NUCLEOTIDE SEQUENCE [LARGE SCALE MRNA]</scope>
    <source>
        <strain>cv. Columbia</strain>
    </source>
</reference>
<reference key="4">
    <citation type="journal article" date="2013" name="PLoS ONE">
        <title>xopAC-triggered immunity against Xanthomonas depends on Arabidopsis receptor-like cytoplasmic kinase genes PBL2 and RIPK.</title>
        <authorList>
            <person name="Guy E."/>
            <person name="Lautier M."/>
            <person name="Chabannes M."/>
            <person name="Roux B."/>
            <person name="Lauber E."/>
            <person name="Arlat M."/>
            <person name="Noel L.D."/>
        </authorList>
    </citation>
    <scope>INTERACTION WITH XANTHOMONAS CAMPESTRIS XOPAC/AVRAC</scope>
</reference>
<reference key="5">
    <citation type="journal article" date="2018" name="Plant Physiol.">
        <title>Roles of receptor-like cytoplasmic kinase VII members in pattern-triggered immune signaling.</title>
        <authorList>
            <person name="Rao S."/>
            <person name="Zhou Z."/>
            <person name="Miao P."/>
            <person name="Bi G."/>
            <person name="Hu M."/>
            <person name="Wu Y."/>
            <person name="Feng F."/>
            <person name="Zhang X."/>
            <person name="Zhou J.M."/>
        </authorList>
    </citation>
    <scope>FUNCTION</scope>
    <scope>GENE FAMILY</scope>
    <scope>NOMENCLATURE</scope>
</reference>
<reference key="6">
    <citation type="journal article" date="2020" name="EMBO J.">
        <title>Tyrosine phosphorylation of the lectin receptor-like kinase LORE regulates plant immunity.</title>
        <authorList>
            <person name="Luo X."/>
            <person name="Wu W."/>
            <person name="Liang Y."/>
            <person name="Xu N."/>
            <person name="Wang Z."/>
            <person name="Zou H."/>
            <person name="Liu J."/>
        </authorList>
    </citation>
    <scope>FUNCTION</scope>
    <scope>CATALYTIC ACTIVITY</scope>
    <scope>INTERACTION WITH SD129</scope>
    <scope>SUBCELLULAR LOCATION</scope>
    <scope>PHOSPHORYLATION AT THR-306 AND THR-310</scope>
    <scope>MUTAGENESIS OF LYS-180</scope>
</reference>
<feature type="initiator methionine" description="Removed" evidence="10">
    <location>
        <position position="1"/>
    </location>
</feature>
<feature type="chain" id="PRO_0000401337" description="Serine/threonine-protein kinase PBL34">
    <location>
        <begin position="2"/>
        <end position="493"/>
    </location>
</feature>
<feature type="domain" description="Protein kinase" evidence="3">
    <location>
        <begin position="142"/>
        <end position="428"/>
    </location>
</feature>
<feature type="region of interest" description="Disordered" evidence="4">
    <location>
        <begin position="1"/>
        <end position="42"/>
    </location>
</feature>
<feature type="region of interest" description="Disordered" evidence="4">
    <location>
        <begin position="84"/>
        <end position="117"/>
    </location>
</feature>
<feature type="region of interest" description="Disordered" evidence="4">
    <location>
        <begin position="447"/>
        <end position="493"/>
    </location>
</feature>
<feature type="compositionally biased region" description="Basic and acidic residues" evidence="4">
    <location>
        <begin position="12"/>
        <end position="37"/>
    </location>
</feature>
<feature type="compositionally biased region" description="Low complexity" evidence="4">
    <location>
        <begin position="100"/>
        <end position="114"/>
    </location>
</feature>
<feature type="compositionally biased region" description="Polar residues" evidence="4">
    <location>
        <begin position="450"/>
        <end position="475"/>
    </location>
</feature>
<feature type="active site" description="Proton acceptor" evidence="3">
    <location>
        <position position="275"/>
    </location>
</feature>
<feature type="binding site" evidence="3">
    <location>
        <begin position="148"/>
        <end position="156"/>
    </location>
    <ligand>
        <name>ATP</name>
        <dbReference type="ChEBI" id="CHEBI:30616"/>
    </ligand>
</feature>
<feature type="binding site" evidence="3">
    <location>
        <position position="180"/>
    </location>
    <ligand>
        <name>ATP</name>
        <dbReference type="ChEBI" id="CHEBI:30616"/>
    </ligand>
</feature>
<feature type="modified residue" description="Phosphothreonine" evidence="1">
    <location>
        <position position="131"/>
    </location>
</feature>
<feature type="modified residue" description="Phosphotyrosine" evidence="1">
    <location>
        <position position="225"/>
    </location>
</feature>
<feature type="modified residue" description="Phosphoserine" evidence="1">
    <location>
        <position position="279"/>
    </location>
</feature>
<feature type="modified residue" description="Phosphothreonine" evidence="7">
    <location>
        <position position="306"/>
    </location>
</feature>
<feature type="modified residue" description="Phosphoserine" evidence="1">
    <location>
        <position position="309"/>
    </location>
</feature>
<feature type="modified residue" description="Phosphothreonine" evidence="7">
    <location>
        <position position="310"/>
    </location>
</feature>
<feature type="modified residue" description="Phosphothreonine" evidence="1">
    <location>
        <position position="315"/>
    </location>
</feature>
<feature type="modified residue" description="Phosphotyrosine" evidence="1">
    <location>
        <position position="323"/>
    </location>
</feature>
<feature type="lipid moiety-binding region" description="N-myristoyl glycine" evidence="2">
    <location>
        <position position="2"/>
    </location>
</feature>
<feature type="mutagenesis site" description="Loss of kinase activity." evidence="7">
    <original>K</original>
    <variation>E</variation>
    <location>
        <position position="180"/>
    </location>
</feature>
<sequence length="493" mass="54799">MGLDAVKAKGNWKSEKPKETENKNHKKKNGDDNKSRNEEEEEGEASGCWVKFRFMIGCIPSKSDLDASSSSIYGSNCTVTTMESKSANEKSNDQPVGQVSSTTTTSNAESSSSTPVISEELNISSHLRKFTFNDLKLSTRNFRPESLLGEGGFGCVFKGWIEENGTAPVKPGTGLTVAVKTLNPDGLQGHKEWLAEINFLGNLLHPNLVKLVGYCIEDDQRLLVYEFMPRGSLENHLFRRSLPLPWSIRMKIALGAAKGLSFLHEEALKPVIYRDFKTSNILLDADYNAKLSDFGLAKDAPDEGKTHVSTRVMGTYGYAAPEYVMTGHLTSKSDVYSFGVVLLEMLTGRRSMDKNRPNGEHNLVEWARPHLLDKRRFYRLLDPRLEGHFSIKGAQKVTQLAAQCLSRDPKIRPKMSDVVEALKPLPHLKDMASSSYYFQTMQAERLKNGSGRSQGFGSRNGQHQPVFRTLSSPHGSSPYRHQIPSPKPKGATT</sequence>
<dbReference type="EC" id="2.7.11.1" evidence="7"/>
<dbReference type="EMBL" id="AL391146">
    <property type="protein sequence ID" value="CAC01827.1"/>
    <property type="molecule type" value="Genomic_DNA"/>
</dbReference>
<dbReference type="EMBL" id="CP002688">
    <property type="protein sequence ID" value="AED92114.1"/>
    <property type="molecule type" value="Genomic_DNA"/>
</dbReference>
<dbReference type="EMBL" id="AY062520">
    <property type="protein sequence ID" value="AAL32598.1"/>
    <property type="molecule type" value="mRNA"/>
</dbReference>
<dbReference type="EMBL" id="BT002577">
    <property type="protein sequence ID" value="AAO00937.1"/>
    <property type="molecule type" value="mRNA"/>
</dbReference>
<dbReference type="PIR" id="T51453">
    <property type="entry name" value="T51453"/>
</dbReference>
<dbReference type="RefSeq" id="NP_197012.1">
    <property type="nucleotide sequence ID" value="NM_121512.5"/>
</dbReference>
<dbReference type="SMR" id="Q9LFP7"/>
<dbReference type="BioGRID" id="16637">
    <property type="interactions" value="3"/>
</dbReference>
<dbReference type="FunCoup" id="Q9LFP7">
    <property type="interactions" value="4208"/>
</dbReference>
<dbReference type="IntAct" id="Q9LFP7">
    <property type="interactions" value="2"/>
</dbReference>
<dbReference type="STRING" id="3702.Q9LFP7"/>
<dbReference type="iPTMnet" id="Q9LFP7"/>
<dbReference type="PaxDb" id="3702-AT5G15080.1"/>
<dbReference type="ProteomicsDB" id="235031"/>
<dbReference type="EnsemblPlants" id="AT5G15080.1">
    <property type="protein sequence ID" value="AT5G15080.1"/>
    <property type="gene ID" value="AT5G15080"/>
</dbReference>
<dbReference type="GeneID" id="831360"/>
<dbReference type="Gramene" id="AT5G15080.1">
    <property type="protein sequence ID" value="AT5G15080.1"/>
    <property type="gene ID" value="AT5G15080"/>
</dbReference>
<dbReference type="KEGG" id="ath:AT5G15080"/>
<dbReference type="Araport" id="AT5G15080"/>
<dbReference type="TAIR" id="AT5G15080">
    <property type="gene designation" value="PBL34"/>
</dbReference>
<dbReference type="eggNOG" id="KOG1187">
    <property type="taxonomic scope" value="Eukaryota"/>
</dbReference>
<dbReference type="HOGENOM" id="CLU_000288_21_1_1"/>
<dbReference type="InParanoid" id="Q9LFP7"/>
<dbReference type="OMA" id="NCWITAN"/>
<dbReference type="OrthoDB" id="4062651at2759"/>
<dbReference type="PhylomeDB" id="Q9LFP7"/>
<dbReference type="PRO" id="PR:Q9LFP7"/>
<dbReference type="Proteomes" id="UP000006548">
    <property type="component" value="Chromosome 5"/>
</dbReference>
<dbReference type="ExpressionAtlas" id="Q9LFP7">
    <property type="expression patterns" value="baseline and differential"/>
</dbReference>
<dbReference type="GO" id="GO:0005886">
    <property type="term" value="C:plasma membrane"/>
    <property type="evidence" value="ECO:0000314"/>
    <property type="project" value="UniProtKB"/>
</dbReference>
<dbReference type="GO" id="GO:0005524">
    <property type="term" value="F:ATP binding"/>
    <property type="evidence" value="ECO:0007669"/>
    <property type="project" value="UniProtKB-KW"/>
</dbReference>
<dbReference type="GO" id="GO:0106310">
    <property type="term" value="F:protein serine kinase activity"/>
    <property type="evidence" value="ECO:0007669"/>
    <property type="project" value="RHEA"/>
</dbReference>
<dbReference type="GO" id="GO:0004674">
    <property type="term" value="F:protein serine/threonine kinase activity"/>
    <property type="evidence" value="ECO:0000314"/>
    <property type="project" value="UniProtKB"/>
</dbReference>
<dbReference type="GO" id="GO:0006952">
    <property type="term" value="P:defense response"/>
    <property type="evidence" value="ECO:0007669"/>
    <property type="project" value="UniProtKB-KW"/>
</dbReference>
<dbReference type="GO" id="GO:0031663">
    <property type="term" value="P:lipopolysaccharide-mediated signaling pathway"/>
    <property type="evidence" value="ECO:0000314"/>
    <property type="project" value="UniProtKB"/>
</dbReference>
<dbReference type="GO" id="GO:0002221">
    <property type="term" value="P:pattern recognition receptor signaling pathway"/>
    <property type="evidence" value="ECO:0000314"/>
    <property type="project" value="UniProtKB"/>
</dbReference>
<dbReference type="CDD" id="cd14066">
    <property type="entry name" value="STKc_IRAK"/>
    <property type="match status" value="1"/>
</dbReference>
<dbReference type="FunFam" id="1.10.510.10:FF:000258">
    <property type="entry name" value="Probable serine/threonine-protein kinase PBL8"/>
    <property type="match status" value="1"/>
</dbReference>
<dbReference type="FunFam" id="3.30.200.20:FF:000228">
    <property type="entry name" value="Serine/threonine-protein kinase BIK1"/>
    <property type="match status" value="1"/>
</dbReference>
<dbReference type="Gene3D" id="3.30.200.20">
    <property type="entry name" value="Phosphorylase Kinase, domain 1"/>
    <property type="match status" value="1"/>
</dbReference>
<dbReference type="Gene3D" id="1.10.510.10">
    <property type="entry name" value="Transferase(Phosphotransferase) domain 1"/>
    <property type="match status" value="1"/>
</dbReference>
<dbReference type="InterPro" id="IPR011009">
    <property type="entry name" value="Kinase-like_dom_sf"/>
</dbReference>
<dbReference type="InterPro" id="IPR050823">
    <property type="entry name" value="Plant_Ser_Thr_Prot_Kinase"/>
</dbReference>
<dbReference type="InterPro" id="IPR000719">
    <property type="entry name" value="Prot_kinase_dom"/>
</dbReference>
<dbReference type="InterPro" id="IPR017441">
    <property type="entry name" value="Protein_kinase_ATP_BS"/>
</dbReference>
<dbReference type="InterPro" id="IPR001245">
    <property type="entry name" value="Ser-Thr/Tyr_kinase_cat_dom"/>
</dbReference>
<dbReference type="InterPro" id="IPR008271">
    <property type="entry name" value="Ser/Thr_kinase_AS"/>
</dbReference>
<dbReference type="PANTHER" id="PTHR45621">
    <property type="entry name" value="OS01G0588500 PROTEIN-RELATED"/>
    <property type="match status" value="1"/>
</dbReference>
<dbReference type="Pfam" id="PF07714">
    <property type="entry name" value="PK_Tyr_Ser-Thr"/>
    <property type="match status" value="1"/>
</dbReference>
<dbReference type="SUPFAM" id="SSF56112">
    <property type="entry name" value="Protein kinase-like (PK-like)"/>
    <property type="match status" value="1"/>
</dbReference>
<dbReference type="PROSITE" id="PS00107">
    <property type="entry name" value="PROTEIN_KINASE_ATP"/>
    <property type="match status" value="1"/>
</dbReference>
<dbReference type="PROSITE" id="PS50011">
    <property type="entry name" value="PROTEIN_KINASE_DOM"/>
    <property type="match status" value="1"/>
</dbReference>
<dbReference type="PROSITE" id="PS00108">
    <property type="entry name" value="PROTEIN_KINASE_ST"/>
    <property type="match status" value="1"/>
</dbReference>
<organism>
    <name type="scientific">Arabidopsis thaliana</name>
    <name type="common">Mouse-ear cress</name>
    <dbReference type="NCBI Taxonomy" id="3702"/>
    <lineage>
        <taxon>Eukaryota</taxon>
        <taxon>Viridiplantae</taxon>
        <taxon>Streptophyta</taxon>
        <taxon>Embryophyta</taxon>
        <taxon>Tracheophyta</taxon>
        <taxon>Spermatophyta</taxon>
        <taxon>Magnoliopsida</taxon>
        <taxon>eudicotyledons</taxon>
        <taxon>Gunneridae</taxon>
        <taxon>Pentapetalae</taxon>
        <taxon>rosids</taxon>
        <taxon>malvids</taxon>
        <taxon>Brassicales</taxon>
        <taxon>Brassicaceae</taxon>
        <taxon>Camelineae</taxon>
        <taxon>Arabidopsis</taxon>
    </lineage>
</organism>
<proteinExistence type="evidence at protein level"/>